<organism>
    <name type="scientific">Mycobacterium tuberculosis (strain ATCC 25618 / H37Rv)</name>
    <dbReference type="NCBI Taxonomy" id="83332"/>
    <lineage>
        <taxon>Bacteria</taxon>
        <taxon>Bacillati</taxon>
        <taxon>Actinomycetota</taxon>
        <taxon>Actinomycetes</taxon>
        <taxon>Mycobacteriales</taxon>
        <taxon>Mycobacteriaceae</taxon>
        <taxon>Mycobacterium</taxon>
        <taxon>Mycobacterium tuberculosis complex</taxon>
    </lineage>
</organism>
<name>Y756_MYCTU</name>
<evidence type="ECO:0000250" key="1"/>
<evidence type="ECO:0000305" key="2"/>
<evidence type="ECO:0007829" key="3">
    <source>
        <dbReference type="PDB" id="6ID6"/>
    </source>
</evidence>
<dbReference type="EC" id="2.1.1.-"/>
<dbReference type="EMBL" id="AL123456">
    <property type="protein sequence ID" value="CCP43476.1"/>
    <property type="molecule type" value="Genomic_DNA"/>
</dbReference>
<dbReference type="RefSeq" id="NP_215245.1">
    <property type="nucleotide sequence ID" value="NC_000962.3"/>
</dbReference>
<dbReference type="RefSeq" id="WP_003403717.1">
    <property type="nucleotide sequence ID" value="NZ_NVQJ01000007.1"/>
</dbReference>
<dbReference type="PDB" id="6ID6">
    <property type="method" value="X-ray"/>
    <property type="resolution" value="1.63 A"/>
    <property type="chains" value="A=11-311"/>
</dbReference>
<dbReference type="PDBsum" id="6ID6"/>
<dbReference type="SMR" id="P9WFI5"/>
<dbReference type="STRING" id="83332.Rv0731c"/>
<dbReference type="PaxDb" id="83332-Rv0731c"/>
<dbReference type="DNASU" id="888556"/>
<dbReference type="GeneID" id="888556"/>
<dbReference type="KEGG" id="mtu:Rv0731c"/>
<dbReference type="KEGG" id="mtv:RVBD_0731c"/>
<dbReference type="TubercuList" id="Rv0731c"/>
<dbReference type="eggNOG" id="COG3315">
    <property type="taxonomic scope" value="Bacteria"/>
</dbReference>
<dbReference type="InParanoid" id="P9WFI5"/>
<dbReference type="OrthoDB" id="9806164at2"/>
<dbReference type="PhylomeDB" id="P9WFI5"/>
<dbReference type="Proteomes" id="UP000001584">
    <property type="component" value="Chromosome"/>
</dbReference>
<dbReference type="GO" id="GO:0008168">
    <property type="term" value="F:methyltransferase activity"/>
    <property type="evidence" value="ECO:0007669"/>
    <property type="project" value="UniProtKB-KW"/>
</dbReference>
<dbReference type="GO" id="GO:0032259">
    <property type="term" value="P:methylation"/>
    <property type="evidence" value="ECO:0007669"/>
    <property type="project" value="UniProtKB-KW"/>
</dbReference>
<dbReference type="Gene3D" id="3.40.50.150">
    <property type="entry name" value="Vaccinia Virus protein VP39"/>
    <property type="match status" value="1"/>
</dbReference>
<dbReference type="InterPro" id="IPR007213">
    <property type="entry name" value="Ppm1/Ppm2/Tcmp"/>
</dbReference>
<dbReference type="InterPro" id="IPR029063">
    <property type="entry name" value="SAM-dependent_MTases_sf"/>
</dbReference>
<dbReference type="InterPro" id="IPR011610">
    <property type="entry name" value="SAM_mthyl_Trfase_ML2640-like"/>
</dbReference>
<dbReference type="NCBIfam" id="TIGR00027">
    <property type="entry name" value="mthyl_TIGR00027"/>
    <property type="match status" value="1"/>
</dbReference>
<dbReference type="PANTHER" id="PTHR43619">
    <property type="entry name" value="S-ADENOSYL-L-METHIONINE-DEPENDENT METHYLTRANSFERASE YKTD-RELATED"/>
    <property type="match status" value="1"/>
</dbReference>
<dbReference type="PANTHER" id="PTHR43619:SF2">
    <property type="entry name" value="S-ADENOSYL-L-METHIONINE-DEPENDENT METHYLTRANSFERASES SUPERFAMILY PROTEIN"/>
    <property type="match status" value="1"/>
</dbReference>
<dbReference type="Pfam" id="PF04072">
    <property type="entry name" value="LCM"/>
    <property type="match status" value="1"/>
</dbReference>
<dbReference type="SUPFAM" id="SSF53335">
    <property type="entry name" value="S-adenosyl-L-methionine-dependent methyltransferases"/>
    <property type="match status" value="1"/>
</dbReference>
<feature type="chain" id="PRO_0000361243" description="Putative S-adenosyl-L-methionine-dependent methyltransferase Rv0731c">
    <location>
        <begin position="1"/>
        <end position="318"/>
    </location>
</feature>
<feature type="binding site" evidence="1">
    <location>
        <position position="135"/>
    </location>
    <ligand>
        <name>S-adenosyl-L-methionine</name>
        <dbReference type="ChEBI" id="CHEBI:59789"/>
    </ligand>
</feature>
<feature type="binding site" evidence="1">
    <location>
        <begin position="164"/>
        <end position="165"/>
    </location>
    <ligand>
        <name>S-adenosyl-L-methionine</name>
        <dbReference type="ChEBI" id="CHEBI:59789"/>
    </ligand>
</feature>
<feature type="helix" evidence="3">
    <location>
        <begin position="16"/>
        <end position="19"/>
    </location>
</feature>
<feature type="helix" evidence="3">
    <location>
        <begin position="22"/>
        <end position="35"/>
    </location>
</feature>
<feature type="helix" evidence="3">
    <location>
        <begin position="47"/>
        <end position="54"/>
    </location>
</feature>
<feature type="helix" evidence="3">
    <location>
        <begin position="57"/>
        <end position="64"/>
    </location>
</feature>
<feature type="helix" evidence="3">
    <location>
        <begin position="69"/>
        <end position="71"/>
    </location>
</feature>
<feature type="helix" evidence="3">
    <location>
        <begin position="74"/>
        <end position="103"/>
    </location>
</feature>
<feature type="strand" evidence="3">
    <location>
        <begin position="108"/>
        <end position="112"/>
    </location>
</feature>
<feature type="helix" evidence="3">
    <location>
        <begin position="119"/>
        <end position="122"/>
    </location>
</feature>
<feature type="strand" evidence="3">
    <location>
        <begin position="130"/>
        <end position="135"/>
    </location>
</feature>
<feature type="helix" evidence="3">
    <location>
        <begin position="137"/>
        <end position="149"/>
    </location>
</feature>
<feature type="strand" evidence="3">
    <location>
        <begin position="155"/>
        <end position="162"/>
    </location>
</feature>
<feature type="helix" evidence="3">
    <location>
        <begin position="169"/>
        <end position="175"/>
    </location>
</feature>
<feature type="strand" evidence="3">
    <location>
        <begin position="185"/>
        <end position="188"/>
    </location>
</feature>
<feature type="helix" evidence="3">
    <location>
        <begin position="192"/>
        <end position="194"/>
    </location>
</feature>
<feature type="helix" evidence="3">
    <location>
        <begin position="197"/>
        <end position="209"/>
    </location>
</feature>
<feature type="strand" evidence="3">
    <location>
        <begin position="216"/>
        <end position="222"/>
    </location>
</feature>
<feature type="turn" evidence="3">
    <location>
        <begin position="227"/>
        <end position="229"/>
    </location>
</feature>
<feature type="helix" evidence="3">
    <location>
        <begin position="230"/>
        <end position="246"/>
    </location>
</feature>
<feature type="helix" evidence="3">
    <location>
        <begin position="253"/>
        <end position="255"/>
    </location>
</feature>
<feature type="helix" evidence="3">
    <location>
        <begin position="265"/>
        <end position="271"/>
    </location>
</feature>
<feature type="strand" evidence="3">
    <location>
        <begin position="274"/>
        <end position="280"/>
    </location>
</feature>
<feature type="helix" evidence="3">
    <location>
        <begin position="281"/>
        <end position="287"/>
    </location>
</feature>
<feature type="helix" evidence="3">
    <location>
        <begin position="295"/>
        <end position="297"/>
    </location>
</feature>
<feature type="strand" evidence="3">
    <location>
        <begin position="303"/>
        <end position="310"/>
    </location>
</feature>
<gene>
    <name type="ordered locus">Rv0731c</name>
</gene>
<keyword id="KW-0002">3D-structure</keyword>
<keyword id="KW-0489">Methyltransferase</keyword>
<keyword id="KW-1185">Reference proteome</keyword>
<keyword id="KW-0949">S-adenosyl-L-methionine</keyword>
<keyword id="KW-0808">Transferase</keyword>
<protein>
    <recommendedName>
        <fullName>Putative S-adenosyl-L-methionine-dependent methyltransferase Rv0731c</fullName>
        <ecNumber>2.1.1.-</ecNumber>
    </recommendedName>
</protein>
<comment type="function">
    <text evidence="1">Exhibits S-adenosyl-L-methionine-dependent methyltransferase activity.</text>
</comment>
<comment type="similarity">
    <text evidence="2">Belongs to the UPF0677 family.</text>
</comment>
<proteinExistence type="evidence at protein level"/>
<sequence length="318" mass="34950">MTQTGSARFEGDSWDLASSVGLTATMVAAARAVAGRAPGALVNDQFAEPLVRAVGVDFFVRMASGELDPDELAEDEANGLRRFADAMAIRTHYFDNFFLDATRAGIRQAVILASGLDSRAYRLRWPAGTIVFEVDQPQVIDFKTTTLAGLGAAPTTDRRTVAVDLRDDWPTALQKAGFDNAQRTAWIAEGLLGYLSAEAQDRLLDQITAQSVPGSQFATEVLRDINRLNEEELRGRMRRLAERFRRHGLDLDMSGLVYFGDRTDARTYLADHGWRTASASTTDLLAEHGLPPIDGDDAPFGEVIYVSAELKQKHQDTR</sequence>
<reference key="1">
    <citation type="journal article" date="1998" name="Nature">
        <title>Deciphering the biology of Mycobacterium tuberculosis from the complete genome sequence.</title>
        <authorList>
            <person name="Cole S.T."/>
            <person name="Brosch R."/>
            <person name="Parkhill J."/>
            <person name="Garnier T."/>
            <person name="Churcher C.M."/>
            <person name="Harris D.E."/>
            <person name="Gordon S.V."/>
            <person name="Eiglmeier K."/>
            <person name="Gas S."/>
            <person name="Barry C.E. III"/>
            <person name="Tekaia F."/>
            <person name="Badcock K."/>
            <person name="Basham D."/>
            <person name="Brown D."/>
            <person name="Chillingworth T."/>
            <person name="Connor R."/>
            <person name="Davies R.M."/>
            <person name="Devlin K."/>
            <person name="Feltwell T."/>
            <person name="Gentles S."/>
            <person name="Hamlin N."/>
            <person name="Holroyd S."/>
            <person name="Hornsby T."/>
            <person name="Jagels K."/>
            <person name="Krogh A."/>
            <person name="McLean J."/>
            <person name="Moule S."/>
            <person name="Murphy L.D."/>
            <person name="Oliver S."/>
            <person name="Osborne J."/>
            <person name="Quail M.A."/>
            <person name="Rajandream M.A."/>
            <person name="Rogers J."/>
            <person name="Rutter S."/>
            <person name="Seeger K."/>
            <person name="Skelton S."/>
            <person name="Squares S."/>
            <person name="Squares R."/>
            <person name="Sulston J.E."/>
            <person name="Taylor K."/>
            <person name="Whitehead S."/>
            <person name="Barrell B.G."/>
        </authorList>
    </citation>
    <scope>NUCLEOTIDE SEQUENCE [LARGE SCALE GENOMIC DNA]</scope>
    <source>
        <strain>ATCC 25618 / H37Rv</strain>
    </source>
</reference>
<reference key="2">
    <citation type="journal article" date="2002" name="Microbiology">
        <title>Re-annotation of the genome sequence of Mycobacterium tuberculosis H37Rv.</title>
        <authorList>
            <person name="Camus J.-C."/>
            <person name="Pryor M.J."/>
            <person name="Medigue C."/>
            <person name="Cole S.T."/>
        </authorList>
    </citation>
    <scope>SEQUENCE REVISION</scope>
    <source>
        <strain>ATCC 25618 / H37Rv</strain>
    </source>
</reference>
<reference key="3">
    <citation type="journal article" date="2011" name="Mol. Cell. Proteomics">
        <title>Proteogenomic analysis of Mycobacterium tuberculosis by high resolution mass spectrometry.</title>
        <authorList>
            <person name="Kelkar D.S."/>
            <person name="Kumar D."/>
            <person name="Kumar P."/>
            <person name="Balakrishnan L."/>
            <person name="Muthusamy B."/>
            <person name="Yadav A.K."/>
            <person name="Shrivastava P."/>
            <person name="Marimuthu A."/>
            <person name="Anand S."/>
            <person name="Sundaram H."/>
            <person name="Kingsbury R."/>
            <person name="Harsha H.C."/>
            <person name="Nair B."/>
            <person name="Prasad T.S."/>
            <person name="Chauhan D.S."/>
            <person name="Katoch K."/>
            <person name="Katoch V.M."/>
            <person name="Kumar P."/>
            <person name="Chaerkady R."/>
            <person name="Ramachandran S."/>
            <person name="Dash D."/>
            <person name="Pandey A."/>
        </authorList>
    </citation>
    <scope>IDENTIFICATION BY MASS SPECTROMETRY [LARGE SCALE ANALYSIS]</scope>
    <source>
        <strain>ATCC 25618 / H37Rv</strain>
    </source>
</reference>
<accession>P9WFI5</accession>
<accession>L0T4P9</accession>
<accession>Q7ARS3</accession>
<accession>Q7D9D6</accession>